<comment type="function">
    <text evidence="5 6 7">Probable GTPase that plays a role in the mitochondrial ribosomal small subunit assembly. Specifically binds the 12S mitochondrial rRNA (12S mt-rRNA) to a 33 nucleotide section delineating the 3' terminal stem-loop region. May act as a chaperone that protects the 12S mt-rRNA on the 28S mitoribosomal subunit during ribosomal small subunit assembly.</text>
</comment>
<comment type="interaction">
    <interactant intactId="EBI-6393536">
        <id>O75616</id>
    </interactant>
    <interactant intactId="EBI-640741">
        <id>P01023</id>
        <label>A2M</label>
    </interactant>
    <organismsDiffer>false</organismsDiffer>
    <experiments>3</experiments>
</comment>
<comment type="interaction">
    <interactant intactId="EBI-6393536">
        <id>O75616</id>
    </interactant>
    <interactant intactId="EBI-744115">
        <id>Q9C0F1</id>
        <label>CEP44</label>
    </interactant>
    <organismsDiffer>false</organismsDiffer>
    <experiments>3</experiments>
</comment>
<comment type="interaction">
    <interactant intactId="EBI-6393536">
        <id>O75616</id>
    </interactant>
    <interactant intactId="EBI-395421">
        <id>Q16637</id>
        <label>SMN2</label>
    </interactant>
    <organismsDiffer>false</organismsDiffer>
    <experiments>3</experiments>
</comment>
<comment type="interaction">
    <interactant intactId="EBI-6393536">
        <id>O75616</id>
    </interactant>
    <interactant intactId="EBI-2212028">
        <id>Q9Y2D8</id>
        <label>SSX2IP</label>
    </interactant>
    <organismsDiffer>false</organismsDiffer>
    <experiments>3</experiments>
</comment>
<comment type="interaction">
    <interactant intactId="EBI-6393536">
        <id>O75616</id>
    </interactant>
    <interactant intactId="EBI-25847109">
        <id>O14656-2</id>
        <label>TOR1A</label>
    </interactant>
    <organismsDiffer>false</organismsDiffer>
    <experiments>3</experiments>
</comment>
<comment type="subcellular location">
    <subcellularLocation>
        <location>Mitochondrion matrix</location>
    </subcellularLocation>
    <subcellularLocation>
        <location>Mitochondrion inner membrane</location>
        <topology>Peripheral membrane protein</topology>
    </subcellularLocation>
    <text>Localizes on the matrix side on the mitochondrial inner membrane.</text>
</comment>
<comment type="alternative products">
    <event type="alternative splicing"/>
    <isoform>
        <id>O75616-1</id>
        <name>HERA-A</name>
        <sequence type="displayed"/>
    </isoform>
    <isoform>
        <id>O75616-2</id>
        <name>HERA-B</name>
        <sequence type="described" ref="VSP_001453"/>
    </isoform>
</comment>
<comment type="disease" evidence="7">
    <disease id="DI-05039">
        <name>Perrault syndrome 6</name>
        <acronym>PRLTS6</acronym>
        <description>A form of Perrault syndrome, a sex-influenced disorder characterized by sensorineural deafness in both males and females, and ovarian dysgenesis in females. Affected females have primary amenorrhea, streak gonads, and infertility, whereas affected males show normal pubertal development and are fertile. PRLTS6 inheritance is autosomal recessive.</description>
        <dbReference type="MIM" id="617565"/>
    </disease>
    <text>The disease is caused by variants affecting the gene represented in this entry.</text>
</comment>
<comment type="miscellaneous">
    <molecule>Isoform HERA-B</molecule>
    <text evidence="9">May be produced at very low levels due to a premature stop codon in the mRNA, leading to nonsense-mediated mRNA decay.</text>
</comment>
<comment type="similarity">
    <text evidence="3 9">Belongs to the TRAFAC class TrmE-Era-EngA-EngB-Septin-like GTPase superfamily. Era GTPase family.</text>
</comment>
<comment type="sequence caution" evidence="9">
    <conflict type="erroneous initiation">
        <sequence resource="EMBL-CDS" id="AAG12978"/>
    </conflict>
    <text>Extended N-terminus.</text>
</comment>
<evidence type="ECO:0000250" key="1">
    <source>
        <dbReference type="UniProtKB" id="P06616"/>
    </source>
</evidence>
<evidence type="ECO:0000255" key="2"/>
<evidence type="ECO:0000255" key="3">
    <source>
        <dbReference type="PROSITE-ProRule" id="PRU01050"/>
    </source>
</evidence>
<evidence type="ECO:0000256" key="4">
    <source>
        <dbReference type="SAM" id="MobiDB-lite"/>
    </source>
</evidence>
<evidence type="ECO:0000269" key="5">
    <source>
    </source>
</evidence>
<evidence type="ECO:0000269" key="6">
    <source>
    </source>
</evidence>
<evidence type="ECO:0000269" key="7">
    <source>
    </source>
</evidence>
<evidence type="ECO:0000303" key="8">
    <source>
    </source>
</evidence>
<evidence type="ECO:0000305" key="9"/>
<evidence type="ECO:0007744" key="10">
    <source>
    </source>
</evidence>
<evidence type="ECO:0007744" key="11">
    <source>
    </source>
</evidence>
<evidence type="ECO:0007829" key="12">
    <source>
        <dbReference type="PDB" id="8CSP"/>
    </source>
</evidence>
<evidence type="ECO:0007829" key="13">
    <source>
        <dbReference type="PDB" id="8CSQ"/>
    </source>
</evidence>
<sequence>MAAPSWRGARLVQSVLRVWQVGPHVARERVIPFSSLLGFQRRCVSCVAGSAFSGPRLASASRSNGQGSALDHFLGFSQPDSSVTPCVPAVSMNRDEQDVLLVHHPDMPENSRVLRVVLLGAPNAGKSTLSNQLLGRKVFPVSRKVHTTRCQALGVITEKETQVILLDTPGIISPGKQKRHHLELSLLEDPWKSMESADLVVVLVDVSDKWTRNQLSPQLLRCLTKYSQIPSVLVMNKVDCLKQKSVLLELTAALTEGVVNGKKLKMRQAFHSHPGTHCPSPAVKDPNTQSVGNPQRIGWPHFKEIFMLSALSQEDVKTLKQYLLTQAQPGPWEYHSAVLTSQTPEEICANIIREKLLEHLPQEVPYNVQQKTAVWEEGPGGELVIQQKLLVPKESYVKLLIGPKGHVISQIAQEAGHDLMDIFLCDVDIRLSVKLLK</sequence>
<protein>
    <recommendedName>
        <fullName>GTPase Era, mitochondrial</fullName>
        <shortName>H-ERA</shortName>
        <shortName>hERA</shortName>
    </recommendedName>
    <alternativeName>
        <fullName>Conserved ERA-like GTPase</fullName>
        <shortName>CEGA</shortName>
    </alternativeName>
    <alternativeName>
        <fullName>ERA-W</fullName>
    </alternativeName>
    <alternativeName>
        <fullName>ERA-like protein 1</fullName>
    </alternativeName>
</protein>
<name>ERAL1_HUMAN</name>
<gene>
    <name type="primary">ERAL1</name>
    <name type="synonym">HERA</name>
</gene>
<feature type="transit peptide" description="Mitochondrion" evidence="2">
    <location>
        <begin position="1"/>
        <end position="43"/>
    </location>
</feature>
<feature type="chain" id="PRO_0000180081" description="GTPase Era, mitochondrial">
    <location>
        <begin position="44"/>
        <end position="437"/>
    </location>
</feature>
<feature type="domain" description="Era-type G" evidence="3">
    <location>
        <begin position="112"/>
        <end position="330"/>
    </location>
</feature>
<feature type="domain" description="KH type-2">
    <location>
        <begin position="360"/>
        <end position="437"/>
    </location>
</feature>
<feature type="region of interest" description="G1" evidence="3">
    <location>
        <begin position="120"/>
        <end position="127"/>
    </location>
</feature>
<feature type="region of interest" description="G2" evidence="3">
    <location>
        <begin position="146"/>
        <end position="150"/>
    </location>
</feature>
<feature type="region of interest" description="G3" evidence="3">
    <location>
        <begin position="167"/>
        <end position="170"/>
    </location>
</feature>
<feature type="region of interest" description="G4" evidence="3">
    <location>
        <begin position="236"/>
        <end position="239"/>
    </location>
</feature>
<feature type="region of interest" description="Disordered" evidence="4">
    <location>
        <begin position="271"/>
        <end position="290"/>
    </location>
</feature>
<feature type="region of interest" description="G5" evidence="3">
    <location>
        <begin position="308"/>
        <end position="310"/>
    </location>
</feature>
<feature type="binding site" evidence="1">
    <location>
        <begin position="120"/>
        <end position="127"/>
    </location>
    <ligand>
        <name>GTP</name>
        <dbReference type="ChEBI" id="CHEBI:37565"/>
    </ligand>
</feature>
<feature type="binding site" evidence="1">
    <location>
        <begin position="167"/>
        <end position="171"/>
    </location>
    <ligand>
        <name>GTP</name>
        <dbReference type="ChEBI" id="CHEBI:37565"/>
    </ligand>
</feature>
<feature type="binding site" evidence="1">
    <location>
        <begin position="236"/>
        <end position="239"/>
    </location>
    <ligand>
        <name>GTP</name>
        <dbReference type="ChEBI" id="CHEBI:37565"/>
    </ligand>
</feature>
<feature type="modified residue" description="Phosphoserine" evidence="10 11">
    <location>
        <position position="173"/>
    </location>
</feature>
<feature type="splice variant" id="VSP_001453" description="In isoform HERA-B." evidence="8">
    <original>GVVNGKKLKMRQAFHSHPGTHCPSPAVKDPNTQSVGNPQRIGWPHFKEIFMLSALSQEDVKTLKQYLLTQAQPGPWEYHSAVLTSQTPEEICANIIREKLLEHLPQEVPYNVQQKTAVWEEGPGGELVIQQKLLVPKESYVKLLIGPKGHVISQIAQEAGHDLMDIFLCDVDIRLSVKLLK</original>
    <variation>AIPSDTGPARALGVPQCSPH</variation>
    <location>
        <begin position="257"/>
        <end position="437"/>
    </location>
</feature>
<feature type="sequence variant" id="VAR_079209" description="In PRLTS6; decreased protein abundance; reduced assembly of the mitochondrial ribosomal small subunit; dbSNP:rs1131692170." evidence="7">
    <original>N</original>
    <variation>I</variation>
    <location>
        <position position="236"/>
    </location>
</feature>
<feature type="sequence conflict" description="In Ref. 1; AAC31603/AAC31604." evidence="9" ref="1">
    <original>M</original>
    <variation>V</variation>
    <location>
        <position position="1"/>
    </location>
</feature>
<feature type="sequence conflict" description="In Ref. 1; AAC31603/AAC31604." evidence="9" ref="1">
    <original>V</original>
    <variation>A</variation>
    <location>
        <position position="15"/>
    </location>
</feature>
<feature type="sequence conflict" description="In Ref. 3; AAG12978." evidence="9" ref="3">
    <original>RV</original>
    <variation>KI</variation>
    <location>
        <begin position="17"/>
        <end position="18"/>
    </location>
</feature>
<feature type="sequence conflict" description="In Ref. 2; BAB56112." evidence="9" ref="2">
    <original>P</original>
    <variation>T</variation>
    <location>
        <position position="190"/>
    </location>
</feature>
<feature type="strand" evidence="13">
    <location>
        <begin position="112"/>
        <end position="119"/>
    </location>
</feature>
<feature type="helix" evidence="13">
    <location>
        <begin position="126"/>
        <end position="134"/>
    </location>
</feature>
<feature type="strand" evidence="13">
    <location>
        <begin position="154"/>
        <end position="158"/>
    </location>
</feature>
<feature type="strand" evidence="13">
    <location>
        <begin position="161"/>
        <end position="167"/>
    </location>
</feature>
<feature type="helix" evidence="13">
    <location>
        <begin position="189"/>
        <end position="195"/>
    </location>
</feature>
<feature type="strand" evidence="13">
    <location>
        <begin position="198"/>
        <end position="205"/>
    </location>
</feature>
<feature type="turn" evidence="13">
    <location>
        <begin position="209"/>
        <end position="213"/>
    </location>
</feature>
<feature type="helix" evidence="13">
    <location>
        <begin position="217"/>
        <end position="225"/>
    </location>
</feature>
<feature type="turn" evidence="13">
    <location>
        <begin position="226"/>
        <end position="228"/>
    </location>
</feature>
<feature type="strand" evidence="13">
    <location>
        <begin position="231"/>
        <end position="236"/>
    </location>
</feature>
<feature type="helix" evidence="13">
    <location>
        <begin position="238"/>
        <end position="240"/>
    </location>
</feature>
<feature type="helix" evidence="13">
    <location>
        <begin position="245"/>
        <end position="254"/>
    </location>
</feature>
<feature type="turn" evidence="12">
    <location>
        <begin position="255"/>
        <end position="257"/>
    </location>
</feature>
<feature type="strand" evidence="13">
    <location>
        <begin position="302"/>
        <end position="307"/>
    </location>
</feature>
<feature type="turn" evidence="13">
    <location>
        <begin position="310"/>
        <end position="313"/>
    </location>
</feature>
<feature type="helix" evidence="13">
    <location>
        <begin position="316"/>
        <end position="325"/>
    </location>
</feature>
<feature type="helix" evidence="13">
    <location>
        <begin position="344"/>
        <end position="359"/>
    </location>
</feature>
<feature type="helix" evidence="13">
    <location>
        <begin position="364"/>
        <end position="367"/>
    </location>
</feature>
<feature type="strand" evidence="13">
    <location>
        <begin position="369"/>
        <end position="377"/>
    </location>
</feature>
<feature type="strand" evidence="13">
    <location>
        <begin position="383"/>
        <end position="392"/>
    </location>
</feature>
<feature type="helix" evidence="13">
    <location>
        <begin position="394"/>
        <end position="401"/>
    </location>
</feature>
<feature type="helix" evidence="13">
    <location>
        <begin position="403"/>
        <end position="405"/>
    </location>
</feature>
<feature type="helix" evidence="13">
    <location>
        <begin position="406"/>
        <end position="423"/>
    </location>
</feature>
<feature type="strand" evidence="13">
    <location>
        <begin position="427"/>
        <end position="435"/>
    </location>
</feature>
<keyword id="KW-0002">3D-structure</keyword>
<keyword id="KW-0025">Alternative splicing</keyword>
<keyword id="KW-0209">Deafness</keyword>
<keyword id="KW-0225">Disease variant</keyword>
<keyword id="KW-0342">GTP-binding</keyword>
<keyword id="KW-0472">Membrane</keyword>
<keyword id="KW-0496">Mitochondrion</keyword>
<keyword id="KW-0999">Mitochondrion inner membrane</keyword>
<keyword id="KW-0547">Nucleotide-binding</keyword>
<keyword id="KW-0597">Phosphoprotein</keyword>
<keyword id="KW-1267">Proteomics identification</keyword>
<keyword id="KW-1185">Reference proteome</keyword>
<keyword id="KW-0690">Ribosome biogenesis</keyword>
<keyword id="KW-0694">RNA-binding</keyword>
<keyword id="KW-0699">rRNA-binding</keyword>
<keyword id="KW-0809">Transit peptide</keyword>
<proteinExistence type="evidence at protein level"/>
<accession>O75616</accession>
<accession>B3KN21</accession>
<accession>C9JEC6</accession>
<accession>O75617</accession>
<accession>Q8WUY4</accession>
<accession>Q96LE2</accession>
<accession>Q96TC0</accession>
<reference key="1">
    <citation type="journal article" date="2000" name="Genomics">
        <title>Isolation and preliminary characterization of the human and mouse homologues of the bacterial cell cycle gene era.</title>
        <authorList>
            <person name="Britton R.A."/>
            <person name="Chen S.M."/>
            <person name="Wallis D."/>
            <person name="Koeuth T."/>
            <person name="Powell B.S."/>
            <person name="Shaffer L.G."/>
            <person name="Largaespada D."/>
            <person name="Jenkins N.A."/>
            <person name="Copeland N.G."/>
            <person name="Court D.L."/>
            <person name="Lupski J.R."/>
        </authorList>
    </citation>
    <scope>NUCLEOTIDE SEQUENCE [MRNA] (ISOFORMS HERA-A AND HERA-B)</scope>
</reference>
<reference key="2">
    <citation type="journal article" date="2001" name="Genes Cells">
        <title>Mammalian homologue of E. coli Ras-like GTPase (ERA) is a possible apoptosis regulator with RNA binding activity.</title>
        <authorList>
            <person name="Akiyama T."/>
            <person name="Gohda J."/>
            <person name="Shibata S."/>
            <person name="Nomura Y."/>
            <person name="Azuma S."/>
            <person name="Ohmori Y."/>
            <person name="Sugano S."/>
            <person name="Arai H."/>
            <person name="Yamamoto T."/>
            <person name="Inoue J."/>
        </authorList>
    </citation>
    <scope>NUCLEOTIDE SEQUENCE [MRNA] (ISOFORM HERA-A)</scope>
    <scope>RNA-BINDING</scope>
</reference>
<reference key="3">
    <citation type="submission" date="2000-08" db="EMBL/GenBank/DDBJ databases">
        <title>cDNA cloning and characterization of human ERA.</title>
        <authorList>
            <person name="Chen S."/>
            <person name="Chen N."/>
            <person name="Ji Z."/>
        </authorList>
    </citation>
    <scope>NUCLEOTIDE SEQUENCE [MRNA] (ISOFORM HERA-A)</scope>
    <source>
        <tissue>Colon</tissue>
    </source>
</reference>
<reference key="4">
    <citation type="journal article" date="2004" name="Nat. Genet.">
        <title>Complete sequencing and characterization of 21,243 full-length human cDNAs.</title>
        <authorList>
            <person name="Ota T."/>
            <person name="Suzuki Y."/>
            <person name="Nishikawa T."/>
            <person name="Otsuki T."/>
            <person name="Sugiyama T."/>
            <person name="Irie R."/>
            <person name="Wakamatsu A."/>
            <person name="Hayashi K."/>
            <person name="Sato H."/>
            <person name="Nagai K."/>
            <person name="Kimura K."/>
            <person name="Makita H."/>
            <person name="Sekine M."/>
            <person name="Obayashi M."/>
            <person name="Nishi T."/>
            <person name="Shibahara T."/>
            <person name="Tanaka T."/>
            <person name="Ishii S."/>
            <person name="Yamamoto J."/>
            <person name="Saito K."/>
            <person name="Kawai Y."/>
            <person name="Isono Y."/>
            <person name="Nakamura Y."/>
            <person name="Nagahari K."/>
            <person name="Murakami K."/>
            <person name="Yasuda T."/>
            <person name="Iwayanagi T."/>
            <person name="Wagatsuma M."/>
            <person name="Shiratori A."/>
            <person name="Sudo H."/>
            <person name="Hosoiri T."/>
            <person name="Kaku Y."/>
            <person name="Kodaira H."/>
            <person name="Kondo H."/>
            <person name="Sugawara M."/>
            <person name="Takahashi M."/>
            <person name="Kanda K."/>
            <person name="Yokoi T."/>
            <person name="Furuya T."/>
            <person name="Kikkawa E."/>
            <person name="Omura Y."/>
            <person name="Abe K."/>
            <person name="Kamihara K."/>
            <person name="Katsuta N."/>
            <person name="Sato K."/>
            <person name="Tanikawa M."/>
            <person name="Yamazaki M."/>
            <person name="Ninomiya K."/>
            <person name="Ishibashi T."/>
            <person name="Yamashita H."/>
            <person name="Murakawa K."/>
            <person name="Fujimori K."/>
            <person name="Tanai H."/>
            <person name="Kimata M."/>
            <person name="Watanabe M."/>
            <person name="Hiraoka S."/>
            <person name="Chiba Y."/>
            <person name="Ishida S."/>
            <person name="Ono Y."/>
            <person name="Takiguchi S."/>
            <person name="Watanabe S."/>
            <person name="Yosida M."/>
            <person name="Hotuta T."/>
            <person name="Kusano J."/>
            <person name="Kanehori K."/>
            <person name="Takahashi-Fujii A."/>
            <person name="Hara H."/>
            <person name="Tanase T.-O."/>
            <person name="Nomura Y."/>
            <person name="Togiya S."/>
            <person name="Komai F."/>
            <person name="Hara R."/>
            <person name="Takeuchi K."/>
            <person name="Arita M."/>
            <person name="Imose N."/>
            <person name="Musashino K."/>
            <person name="Yuuki H."/>
            <person name="Oshima A."/>
            <person name="Sasaki N."/>
            <person name="Aotsuka S."/>
            <person name="Yoshikawa Y."/>
            <person name="Matsunawa H."/>
            <person name="Ichihara T."/>
            <person name="Shiohata N."/>
            <person name="Sano S."/>
            <person name="Moriya S."/>
            <person name="Momiyama H."/>
            <person name="Satoh N."/>
            <person name="Takami S."/>
            <person name="Terashima Y."/>
            <person name="Suzuki O."/>
            <person name="Nakagawa S."/>
            <person name="Senoh A."/>
            <person name="Mizoguchi H."/>
            <person name="Goto Y."/>
            <person name="Shimizu F."/>
            <person name="Wakebe H."/>
            <person name="Hishigaki H."/>
            <person name="Watanabe T."/>
            <person name="Sugiyama A."/>
            <person name="Takemoto M."/>
            <person name="Kawakami B."/>
            <person name="Yamazaki M."/>
            <person name="Watanabe K."/>
            <person name="Kumagai A."/>
            <person name="Itakura S."/>
            <person name="Fukuzumi Y."/>
            <person name="Fujimori Y."/>
            <person name="Komiyama M."/>
            <person name="Tashiro H."/>
            <person name="Tanigami A."/>
            <person name="Fujiwara T."/>
            <person name="Ono T."/>
            <person name="Yamada K."/>
            <person name="Fujii Y."/>
            <person name="Ozaki K."/>
            <person name="Hirao M."/>
            <person name="Ohmori Y."/>
            <person name="Kawabata A."/>
            <person name="Hikiji T."/>
            <person name="Kobatake N."/>
            <person name="Inagaki H."/>
            <person name="Ikema Y."/>
            <person name="Okamoto S."/>
            <person name="Okitani R."/>
            <person name="Kawakami T."/>
            <person name="Noguchi S."/>
            <person name="Itoh T."/>
            <person name="Shigeta K."/>
            <person name="Senba T."/>
            <person name="Matsumura K."/>
            <person name="Nakajima Y."/>
            <person name="Mizuno T."/>
            <person name="Morinaga M."/>
            <person name="Sasaki M."/>
            <person name="Togashi T."/>
            <person name="Oyama M."/>
            <person name="Hata H."/>
            <person name="Watanabe M."/>
            <person name="Komatsu T."/>
            <person name="Mizushima-Sugano J."/>
            <person name="Satoh T."/>
            <person name="Shirai Y."/>
            <person name="Takahashi Y."/>
            <person name="Nakagawa K."/>
            <person name="Okumura K."/>
            <person name="Nagase T."/>
            <person name="Nomura N."/>
            <person name="Kikuchi H."/>
            <person name="Masuho Y."/>
            <person name="Yamashita R."/>
            <person name="Nakai K."/>
            <person name="Yada T."/>
            <person name="Nakamura Y."/>
            <person name="Ohara O."/>
            <person name="Isogai T."/>
            <person name="Sugano S."/>
        </authorList>
    </citation>
    <scope>NUCLEOTIDE SEQUENCE [LARGE SCALE MRNA] (ISOFORM HERA-A)</scope>
    <source>
        <tissue>Ovary</tissue>
    </source>
</reference>
<reference key="5">
    <citation type="journal article" date="2006" name="Nature">
        <title>DNA sequence of human chromosome 17 and analysis of rearrangement in the human lineage.</title>
        <authorList>
            <person name="Zody M.C."/>
            <person name="Garber M."/>
            <person name="Adams D.J."/>
            <person name="Sharpe T."/>
            <person name="Harrow J."/>
            <person name="Lupski J.R."/>
            <person name="Nicholson C."/>
            <person name="Searle S.M."/>
            <person name="Wilming L."/>
            <person name="Young S.K."/>
            <person name="Abouelleil A."/>
            <person name="Allen N.R."/>
            <person name="Bi W."/>
            <person name="Bloom T."/>
            <person name="Borowsky M.L."/>
            <person name="Bugalter B.E."/>
            <person name="Butler J."/>
            <person name="Chang J.L."/>
            <person name="Chen C.-K."/>
            <person name="Cook A."/>
            <person name="Corum B."/>
            <person name="Cuomo C.A."/>
            <person name="de Jong P.J."/>
            <person name="DeCaprio D."/>
            <person name="Dewar K."/>
            <person name="FitzGerald M."/>
            <person name="Gilbert J."/>
            <person name="Gibson R."/>
            <person name="Gnerre S."/>
            <person name="Goldstein S."/>
            <person name="Grafham D.V."/>
            <person name="Grocock R."/>
            <person name="Hafez N."/>
            <person name="Hagopian D.S."/>
            <person name="Hart E."/>
            <person name="Norman C.H."/>
            <person name="Humphray S."/>
            <person name="Jaffe D.B."/>
            <person name="Jones M."/>
            <person name="Kamal M."/>
            <person name="Khodiyar V.K."/>
            <person name="LaButti K."/>
            <person name="Laird G."/>
            <person name="Lehoczky J."/>
            <person name="Liu X."/>
            <person name="Lokyitsang T."/>
            <person name="Loveland J."/>
            <person name="Lui A."/>
            <person name="Macdonald P."/>
            <person name="Major J.E."/>
            <person name="Matthews L."/>
            <person name="Mauceli E."/>
            <person name="McCarroll S.A."/>
            <person name="Mihalev A.H."/>
            <person name="Mudge J."/>
            <person name="Nguyen C."/>
            <person name="Nicol R."/>
            <person name="O'Leary S.B."/>
            <person name="Osoegawa K."/>
            <person name="Schwartz D.C."/>
            <person name="Shaw-Smith C."/>
            <person name="Stankiewicz P."/>
            <person name="Steward C."/>
            <person name="Swarbreck D."/>
            <person name="Venkataraman V."/>
            <person name="Whittaker C.A."/>
            <person name="Yang X."/>
            <person name="Zimmer A.R."/>
            <person name="Bradley A."/>
            <person name="Hubbard T."/>
            <person name="Birren B.W."/>
            <person name="Rogers J."/>
            <person name="Lander E.S."/>
            <person name="Nusbaum C."/>
        </authorList>
    </citation>
    <scope>NUCLEOTIDE SEQUENCE [LARGE SCALE GENOMIC DNA]</scope>
</reference>
<reference key="6">
    <citation type="submission" date="2005-07" db="EMBL/GenBank/DDBJ databases">
        <authorList>
            <person name="Mural R.J."/>
            <person name="Istrail S."/>
            <person name="Sutton G.G."/>
            <person name="Florea L."/>
            <person name="Halpern A.L."/>
            <person name="Mobarry C.M."/>
            <person name="Lippert R."/>
            <person name="Walenz B."/>
            <person name="Shatkay H."/>
            <person name="Dew I."/>
            <person name="Miller J.R."/>
            <person name="Flanigan M.J."/>
            <person name="Edwards N.J."/>
            <person name="Bolanos R."/>
            <person name="Fasulo D."/>
            <person name="Halldorsson B.V."/>
            <person name="Hannenhalli S."/>
            <person name="Turner R."/>
            <person name="Yooseph S."/>
            <person name="Lu F."/>
            <person name="Nusskern D.R."/>
            <person name="Shue B.C."/>
            <person name="Zheng X.H."/>
            <person name="Zhong F."/>
            <person name="Delcher A.L."/>
            <person name="Huson D.H."/>
            <person name="Kravitz S.A."/>
            <person name="Mouchard L."/>
            <person name="Reinert K."/>
            <person name="Remington K.A."/>
            <person name="Clark A.G."/>
            <person name="Waterman M.S."/>
            <person name="Eichler E.E."/>
            <person name="Adams M.D."/>
            <person name="Hunkapiller M.W."/>
            <person name="Myers E.W."/>
            <person name="Venter J.C."/>
        </authorList>
    </citation>
    <scope>NUCLEOTIDE SEQUENCE [LARGE SCALE GENOMIC DNA]</scope>
</reference>
<reference key="7">
    <citation type="journal article" date="2004" name="Genome Res.">
        <title>The status, quality, and expansion of the NIH full-length cDNA project: the Mammalian Gene Collection (MGC).</title>
        <authorList>
            <consortium name="The MGC Project Team"/>
        </authorList>
    </citation>
    <scope>NUCLEOTIDE SEQUENCE [LARGE SCALE MRNA] (ISOFORM HERA-A)</scope>
    <source>
        <tissue>Brain</tissue>
    </source>
</reference>
<reference key="8">
    <citation type="journal article" date="2004" name="Genome Biol.">
        <title>An unappreciated role for RNA surveillance.</title>
        <authorList>
            <person name="Hillman R.T."/>
            <person name="Green R.E."/>
            <person name="Brenner S.E."/>
        </authorList>
    </citation>
    <scope>SPLICE ISOFORM(S) THAT ARE POTENTIAL NMD TARGET(S)</scope>
</reference>
<reference key="9">
    <citation type="journal article" date="2010" name="Biochem. J.">
        <title>Human ERAL1 is a mitochondrial RNA chaperone involved in the assembly of the 28S small mitochondrial ribosomal subunit.</title>
        <authorList>
            <person name="Dennerlein S."/>
            <person name="Rozanska A."/>
            <person name="Wydro M."/>
            <person name="Chrzanowska-Lightowlers Z.M."/>
            <person name="Lightowlers R.N."/>
        </authorList>
    </citation>
    <scope>FUNCTION</scope>
    <scope>SUBCELLULAR LOCATION</scope>
    <scope>RNA-BINDING</scope>
</reference>
<reference key="10">
    <citation type="journal article" date="2010" name="Nucleic Acids Res.">
        <title>ERAL1 is associated with mitochondrial ribosome and elimination of ERAL1 leads to mitochondrial dysfunction and growth retardation.</title>
        <authorList>
            <person name="Uchiumi T."/>
            <person name="Ohgaki K."/>
            <person name="Yagi M."/>
            <person name="Aoki Y."/>
            <person name="Sakai A."/>
            <person name="Matsumoto S."/>
            <person name="Kang D."/>
        </authorList>
    </citation>
    <scope>FUNCTION</scope>
    <scope>SUBCELLULAR LOCATION</scope>
    <scope>RNA-BINDING</scope>
</reference>
<reference key="11">
    <citation type="journal article" date="2010" name="Sci. Signal.">
        <title>Quantitative phosphoproteomics reveals widespread full phosphorylation site occupancy during mitosis.</title>
        <authorList>
            <person name="Olsen J.V."/>
            <person name="Vermeulen M."/>
            <person name="Santamaria A."/>
            <person name="Kumar C."/>
            <person name="Miller M.L."/>
            <person name="Jensen L.J."/>
            <person name="Gnad F."/>
            <person name="Cox J."/>
            <person name="Jensen T.S."/>
            <person name="Nigg E.A."/>
            <person name="Brunak S."/>
            <person name="Mann M."/>
        </authorList>
    </citation>
    <scope>PHOSPHORYLATION [LARGE SCALE ANALYSIS] AT SER-173</scope>
    <scope>IDENTIFICATION BY MASS SPECTROMETRY [LARGE SCALE ANALYSIS]</scope>
    <source>
        <tissue>Cervix carcinoma</tissue>
    </source>
</reference>
<reference key="12">
    <citation type="journal article" date="2011" name="BMC Syst. Biol.">
        <title>Initial characterization of the human central proteome.</title>
        <authorList>
            <person name="Burkard T.R."/>
            <person name="Planyavsky M."/>
            <person name="Kaupe I."/>
            <person name="Breitwieser F.P."/>
            <person name="Buerckstuemmer T."/>
            <person name="Bennett K.L."/>
            <person name="Superti-Furga G."/>
            <person name="Colinge J."/>
        </authorList>
    </citation>
    <scope>IDENTIFICATION BY MASS SPECTROMETRY [LARGE SCALE ANALYSIS]</scope>
</reference>
<reference key="13">
    <citation type="journal article" date="2013" name="J. Proteome Res.">
        <title>Toward a comprehensive characterization of a human cancer cell phosphoproteome.</title>
        <authorList>
            <person name="Zhou H."/>
            <person name="Di Palma S."/>
            <person name="Preisinger C."/>
            <person name="Peng M."/>
            <person name="Polat A.N."/>
            <person name="Heck A.J."/>
            <person name="Mohammed S."/>
        </authorList>
    </citation>
    <scope>PHOSPHORYLATION [LARGE SCALE ANALYSIS] AT SER-173</scope>
    <scope>IDENTIFICATION BY MASS SPECTROMETRY [LARGE SCALE ANALYSIS]</scope>
    <source>
        <tissue>Erythroleukemia</tissue>
    </source>
</reference>
<reference key="14">
    <citation type="journal article" date="2015" name="Proteomics">
        <title>N-terminome analysis of the human mitochondrial proteome.</title>
        <authorList>
            <person name="Vaca Jacome A.S."/>
            <person name="Rabilloud T."/>
            <person name="Schaeffer-Reiss C."/>
            <person name="Rompais M."/>
            <person name="Ayoub D."/>
            <person name="Lane L."/>
            <person name="Bairoch A."/>
            <person name="Van Dorsselaer A."/>
            <person name="Carapito C."/>
        </authorList>
    </citation>
    <scope>IDENTIFICATION BY MASS SPECTROMETRY [LARGE SCALE ANALYSIS]</scope>
</reference>
<reference key="15">
    <citation type="journal article" date="2017" name="Hum. Mol. Genet.">
        <title>A homozygous missense mutation in ERAL1, encoding a mitochondrial rRNA chaperone, causes Perrault syndrome.</title>
        <authorList>
            <person name="Chatzispyrou I.A."/>
            <person name="Alders M."/>
            <person name="Guerrero-Castillo S."/>
            <person name="Zapata Perez R."/>
            <person name="Haagmans M.A."/>
            <person name="Mouchiroud L."/>
            <person name="Koster J."/>
            <person name="Ofman R."/>
            <person name="Baas F."/>
            <person name="Waterham H.R."/>
            <person name="Spelbrink J.N."/>
            <person name="Auwerx J."/>
            <person name="Mannens M.M."/>
            <person name="Houtkooper R.H."/>
            <person name="Plomp A.S."/>
        </authorList>
    </citation>
    <scope>VARIANT PRLTS6 ILE-236</scope>
    <scope>CHARACTERIZATION OF VARIANT PRLTS6 ILE-236</scope>
    <scope>FUNCTION</scope>
</reference>
<organism>
    <name type="scientific">Homo sapiens</name>
    <name type="common">Human</name>
    <dbReference type="NCBI Taxonomy" id="9606"/>
    <lineage>
        <taxon>Eukaryota</taxon>
        <taxon>Metazoa</taxon>
        <taxon>Chordata</taxon>
        <taxon>Craniata</taxon>
        <taxon>Vertebrata</taxon>
        <taxon>Euteleostomi</taxon>
        <taxon>Mammalia</taxon>
        <taxon>Eutheria</taxon>
        <taxon>Euarchontoglires</taxon>
        <taxon>Primates</taxon>
        <taxon>Haplorrhini</taxon>
        <taxon>Catarrhini</taxon>
        <taxon>Hominidae</taxon>
        <taxon>Homo</taxon>
    </lineage>
</organism>
<dbReference type="EMBL" id="AF082657">
    <property type="protein sequence ID" value="AAC31603.1"/>
    <property type="molecule type" value="mRNA"/>
</dbReference>
<dbReference type="EMBL" id="AF082658">
    <property type="protein sequence ID" value="AAC31604.1"/>
    <property type="molecule type" value="mRNA"/>
</dbReference>
<dbReference type="EMBL" id="AB049388">
    <property type="protein sequence ID" value="BAB56112.1"/>
    <property type="molecule type" value="mRNA"/>
</dbReference>
<dbReference type="EMBL" id="AY007435">
    <property type="protein sequence ID" value="AAG12978.1"/>
    <property type="status" value="ALT_INIT"/>
    <property type="molecule type" value="mRNA"/>
</dbReference>
<dbReference type="EMBL" id="AK023342">
    <property type="protein sequence ID" value="BAG51183.1"/>
    <property type="molecule type" value="mRNA"/>
</dbReference>
<dbReference type="EMBL" id="AC024267">
    <property type="status" value="NOT_ANNOTATED_CDS"/>
    <property type="molecule type" value="Genomic_DNA"/>
</dbReference>
<dbReference type="EMBL" id="CH471159">
    <property type="protein sequence ID" value="EAW51147.1"/>
    <property type="molecule type" value="Genomic_DNA"/>
</dbReference>
<dbReference type="EMBL" id="BC019094">
    <property type="protein sequence ID" value="AAH19094.1"/>
    <property type="molecule type" value="mRNA"/>
</dbReference>
<dbReference type="CCDS" id="CCDS11244.1">
    <molecule id="O75616-1"/>
</dbReference>
<dbReference type="RefSeq" id="NP_001304914.1">
    <property type="nucleotide sequence ID" value="NM_001317985.1"/>
</dbReference>
<dbReference type="RefSeq" id="NP_001304915.1">
    <property type="nucleotide sequence ID" value="NM_001317986.1"/>
</dbReference>
<dbReference type="RefSeq" id="NP_005693.1">
    <molecule id="O75616-1"/>
    <property type="nucleotide sequence ID" value="NM_005702.4"/>
</dbReference>
<dbReference type="PDB" id="8CSP">
    <property type="method" value="EM"/>
    <property type="resolution" value="2.66 A"/>
    <property type="chains" value="a=1-437"/>
</dbReference>
<dbReference type="PDB" id="8CSQ">
    <property type="method" value="EM"/>
    <property type="resolution" value="2.54 A"/>
    <property type="chains" value="a=1-437"/>
</dbReference>
<dbReference type="PDBsum" id="8CSP"/>
<dbReference type="PDBsum" id="8CSQ"/>
<dbReference type="EMDB" id="EMD-26966"/>
<dbReference type="EMDB" id="EMD-26967"/>
<dbReference type="SMR" id="O75616"/>
<dbReference type="BioGRID" id="117666">
    <property type="interactions" value="251"/>
</dbReference>
<dbReference type="FunCoup" id="O75616">
    <property type="interactions" value="2830"/>
</dbReference>
<dbReference type="IntAct" id="O75616">
    <property type="interactions" value="116"/>
</dbReference>
<dbReference type="MINT" id="O75616"/>
<dbReference type="STRING" id="9606.ENSP00000254928"/>
<dbReference type="GlyGen" id="O75616">
    <property type="glycosylation" value="1 site, 1 O-linked glycan (1 site)"/>
</dbReference>
<dbReference type="iPTMnet" id="O75616"/>
<dbReference type="PhosphoSitePlus" id="O75616"/>
<dbReference type="SwissPalm" id="O75616"/>
<dbReference type="BioMuta" id="ERAL1"/>
<dbReference type="jPOST" id="O75616"/>
<dbReference type="MassIVE" id="O75616"/>
<dbReference type="PaxDb" id="9606-ENSP00000254928"/>
<dbReference type="PeptideAtlas" id="O75616"/>
<dbReference type="ProteomicsDB" id="50120">
    <molecule id="O75616-1"/>
</dbReference>
<dbReference type="ProteomicsDB" id="50121">
    <molecule id="O75616-2"/>
</dbReference>
<dbReference type="Pumba" id="O75616"/>
<dbReference type="Antibodypedia" id="14896">
    <property type="antibodies" value="210 antibodies from 27 providers"/>
</dbReference>
<dbReference type="DNASU" id="26284"/>
<dbReference type="Ensembl" id="ENST00000254928.10">
    <molecule id="O75616-1"/>
    <property type="protein sequence ID" value="ENSP00000254928.5"/>
    <property type="gene ID" value="ENSG00000132591.12"/>
</dbReference>
<dbReference type="GeneID" id="26284"/>
<dbReference type="KEGG" id="hsa:26284"/>
<dbReference type="MANE-Select" id="ENST00000254928.10">
    <property type="protein sequence ID" value="ENSP00000254928.5"/>
    <property type="RefSeq nucleotide sequence ID" value="NM_005702.4"/>
    <property type="RefSeq protein sequence ID" value="NP_005693.1"/>
</dbReference>
<dbReference type="UCSC" id="uc002hcy.2">
    <molecule id="O75616-1"/>
    <property type="organism name" value="human"/>
</dbReference>
<dbReference type="AGR" id="HGNC:3424"/>
<dbReference type="CTD" id="26284"/>
<dbReference type="DisGeNET" id="26284"/>
<dbReference type="GeneCards" id="ERAL1"/>
<dbReference type="GeneReviews" id="ERAL1"/>
<dbReference type="HGNC" id="HGNC:3424">
    <property type="gene designation" value="ERAL1"/>
</dbReference>
<dbReference type="HPA" id="ENSG00000132591">
    <property type="expression patterns" value="Low tissue specificity"/>
</dbReference>
<dbReference type="MalaCards" id="ERAL1"/>
<dbReference type="MIM" id="607435">
    <property type="type" value="gene"/>
</dbReference>
<dbReference type="MIM" id="617565">
    <property type="type" value="phenotype"/>
</dbReference>
<dbReference type="neXtProt" id="NX_O75616"/>
<dbReference type="OpenTargets" id="ENSG00000132591"/>
<dbReference type="Orphanet" id="642945">
    <property type="disease" value="Perrault syndrome type 1"/>
</dbReference>
<dbReference type="Orphanet" id="642976">
    <property type="disease" value="Perrault syndrome type 2"/>
</dbReference>
<dbReference type="PharmGKB" id="PA27843"/>
<dbReference type="VEuPathDB" id="HostDB:ENSG00000132591"/>
<dbReference type="eggNOG" id="KOG1423">
    <property type="taxonomic scope" value="Eukaryota"/>
</dbReference>
<dbReference type="GeneTree" id="ENSGT00390000013800"/>
<dbReference type="HOGENOM" id="CLU_038009_2_1_1"/>
<dbReference type="InParanoid" id="O75616"/>
<dbReference type="OMA" id="WAEVDVI"/>
<dbReference type="OrthoDB" id="8954335at2759"/>
<dbReference type="PAN-GO" id="O75616">
    <property type="GO annotations" value="4 GO annotations based on evolutionary models"/>
</dbReference>
<dbReference type="PhylomeDB" id="O75616"/>
<dbReference type="TreeFam" id="TF321650"/>
<dbReference type="PathwayCommons" id="O75616"/>
<dbReference type="Reactome" id="R-HSA-5368286">
    <property type="pathway name" value="Mitochondrial translation initiation"/>
</dbReference>
<dbReference type="Reactome" id="R-HSA-5389840">
    <property type="pathway name" value="Mitochondrial translation elongation"/>
</dbReference>
<dbReference type="Reactome" id="R-HSA-5419276">
    <property type="pathway name" value="Mitochondrial translation termination"/>
</dbReference>
<dbReference type="SignaLink" id="O75616"/>
<dbReference type="BioGRID-ORCS" id="26284">
    <property type="hits" value="256 hits in 1168 CRISPR screens"/>
</dbReference>
<dbReference type="CD-CODE" id="5965E019">
    <property type="entry name" value="mtRNA granule"/>
</dbReference>
<dbReference type="ChiTaRS" id="ERAL1">
    <property type="organism name" value="human"/>
</dbReference>
<dbReference type="GenomeRNAi" id="26284"/>
<dbReference type="Pharos" id="O75616">
    <property type="development level" value="Tbio"/>
</dbReference>
<dbReference type="PRO" id="PR:O75616"/>
<dbReference type="Proteomes" id="UP000005640">
    <property type="component" value="Chromosome 17"/>
</dbReference>
<dbReference type="RNAct" id="O75616">
    <property type="molecule type" value="protein"/>
</dbReference>
<dbReference type="Bgee" id="ENSG00000132591">
    <property type="expression patterns" value="Expressed in mucosa of transverse colon and 173 other cell types or tissues"/>
</dbReference>
<dbReference type="ExpressionAtlas" id="O75616">
    <property type="expression patterns" value="baseline and differential"/>
</dbReference>
<dbReference type="GO" id="GO:0005829">
    <property type="term" value="C:cytosol"/>
    <property type="evidence" value="ECO:0000314"/>
    <property type="project" value="HPA"/>
</dbReference>
<dbReference type="GO" id="GO:0005743">
    <property type="term" value="C:mitochondrial inner membrane"/>
    <property type="evidence" value="ECO:0007669"/>
    <property type="project" value="UniProtKB-SubCell"/>
</dbReference>
<dbReference type="GO" id="GO:0005759">
    <property type="term" value="C:mitochondrial matrix"/>
    <property type="evidence" value="ECO:0000314"/>
    <property type="project" value="UniProtKB"/>
</dbReference>
<dbReference type="GO" id="GO:0005739">
    <property type="term" value="C:mitochondrion"/>
    <property type="evidence" value="ECO:0000314"/>
    <property type="project" value="HPA"/>
</dbReference>
<dbReference type="GO" id="GO:0005525">
    <property type="term" value="F:GTP binding"/>
    <property type="evidence" value="ECO:0007669"/>
    <property type="project" value="UniProtKB-KW"/>
</dbReference>
<dbReference type="GO" id="GO:0043024">
    <property type="term" value="F:ribosomal small subunit binding"/>
    <property type="evidence" value="ECO:0000314"/>
    <property type="project" value="UniProtKB"/>
</dbReference>
<dbReference type="GO" id="GO:0003723">
    <property type="term" value="F:RNA binding"/>
    <property type="evidence" value="ECO:0007005"/>
    <property type="project" value="UniProtKB"/>
</dbReference>
<dbReference type="GO" id="GO:0019843">
    <property type="term" value="F:rRNA binding"/>
    <property type="evidence" value="ECO:0000314"/>
    <property type="project" value="UniProtKB"/>
</dbReference>
<dbReference type="GO" id="GO:0000028">
    <property type="term" value="P:ribosomal small subunit assembly"/>
    <property type="evidence" value="ECO:0000315"/>
    <property type="project" value="UniProtKB"/>
</dbReference>
<dbReference type="CDD" id="cd04163">
    <property type="entry name" value="Era"/>
    <property type="match status" value="1"/>
</dbReference>
<dbReference type="CDD" id="cd22534">
    <property type="entry name" value="KH-II_Era"/>
    <property type="match status" value="1"/>
</dbReference>
<dbReference type="FunFam" id="3.30.300.20:FF:000016">
    <property type="entry name" value="GTPase Era, mitochondrial isoform 1"/>
    <property type="match status" value="1"/>
</dbReference>
<dbReference type="FunFam" id="3.40.50.300:FF:001024">
    <property type="entry name" value="GTPase Era, mitochondrial isoform 1"/>
    <property type="match status" value="1"/>
</dbReference>
<dbReference type="Gene3D" id="3.30.300.20">
    <property type="match status" value="1"/>
</dbReference>
<dbReference type="Gene3D" id="3.40.50.300">
    <property type="entry name" value="P-loop containing nucleotide triphosphate hydrolases"/>
    <property type="match status" value="1"/>
</dbReference>
<dbReference type="HAMAP" id="MF_00367">
    <property type="entry name" value="GTPase_Era"/>
    <property type="match status" value="1"/>
</dbReference>
<dbReference type="InterPro" id="IPR030388">
    <property type="entry name" value="G_ERA_dom"/>
</dbReference>
<dbReference type="InterPro" id="IPR006073">
    <property type="entry name" value="GTP-bd"/>
</dbReference>
<dbReference type="InterPro" id="IPR005662">
    <property type="entry name" value="GTPase_Era-like"/>
</dbReference>
<dbReference type="InterPro" id="IPR015946">
    <property type="entry name" value="KH_dom-like_a/b"/>
</dbReference>
<dbReference type="InterPro" id="IPR009019">
    <property type="entry name" value="KH_sf_prok-type"/>
</dbReference>
<dbReference type="InterPro" id="IPR027417">
    <property type="entry name" value="P-loop_NTPase"/>
</dbReference>
<dbReference type="InterPro" id="IPR005225">
    <property type="entry name" value="Small_GTP-bd"/>
</dbReference>
<dbReference type="NCBIfam" id="TIGR00231">
    <property type="entry name" value="small_GTP"/>
    <property type="match status" value="1"/>
</dbReference>
<dbReference type="PANTHER" id="PTHR42698">
    <property type="entry name" value="GTPASE ERA"/>
    <property type="match status" value="1"/>
</dbReference>
<dbReference type="PANTHER" id="PTHR42698:SF1">
    <property type="entry name" value="GTPASE ERA, MITOCHONDRIAL"/>
    <property type="match status" value="1"/>
</dbReference>
<dbReference type="Pfam" id="PF01926">
    <property type="entry name" value="MMR_HSR1"/>
    <property type="match status" value="1"/>
</dbReference>
<dbReference type="PRINTS" id="PR00326">
    <property type="entry name" value="GTP1OBG"/>
</dbReference>
<dbReference type="SUPFAM" id="SSF52540">
    <property type="entry name" value="P-loop containing nucleoside triphosphate hydrolases"/>
    <property type="match status" value="1"/>
</dbReference>
<dbReference type="SUPFAM" id="SSF54814">
    <property type="entry name" value="Prokaryotic type KH domain (KH-domain type II)"/>
    <property type="match status" value="1"/>
</dbReference>
<dbReference type="PROSITE" id="PS51713">
    <property type="entry name" value="G_ERA"/>
    <property type="match status" value="1"/>
</dbReference>